<reference key="1">
    <citation type="journal article" date="2001" name="Nat. Genet.">
        <title>An abundance of X-linked genes expressed in spermatogonia.</title>
        <authorList>
            <person name="Wang P.J."/>
            <person name="McCarrey J.R."/>
            <person name="Yang F."/>
            <person name="Page D.C."/>
        </authorList>
    </citation>
    <scope>NUCLEOTIDE SEQUENCE [MRNA]</scope>
    <scope>TISSUE SPECIFICITY</scope>
    <source>
        <tissue>Testis</tissue>
    </source>
</reference>
<reference key="2">
    <citation type="journal article" date="2009" name="PLoS Biol.">
        <title>Lineage-specific biology revealed by a finished genome assembly of the mouse.</title>
        <authorList>
            <person name="Church D.M."/>
            <person name="Goodstadt L."/>
            <person name="Hillier L.W."/>
            <person name="Zody M.C."/>
            <person name="Goldstein S."/>
            <person name="She X."/>
            <person name="Bult C.J."/>
            <person name="Agarwala R."/>
            <person name="Cherry J.L."/>
            <person name="DiCuccio M."/>
            <person name="Hlavina W."/>
            <person name="Kapustin Y."/>
            <person name="Meric P."/>
            <person name="Maglott D."/>
            <person name="Birtle Z."/>
            <person name="Marques A.C."/>
            <person name="Graves T."/>
            <person name="Zhou S."/>
            <person name="Teague B."/>
            <person name="Potamousis K."/>
            <person name="Churas C."/>
            <person name="Place M."/>
            <person name="Herschleb J."/>
            <person name="Runnheim R."/>
            <person name="Forrest D."/>
            <person name="Amos-Landgraf J."/>
            <person name="Schwartz D.C."/>
            <person name="Cheng Z."/>
            <person name="Lindblad-Toh K."/>
            <person name="Eichler E.E."/>
            <person name="Ponting C.P."/>
        </authorList>
    </citation>
    <scope>NUCLEOTIDE SEQUENCE [LARGE SCALE GENOMIC DNA]</scope>
    <source>
        <strain>C57BL/6J</strain>
    </source>
</reference>
<evidence type="ECO:0000255" key="1">
    <source>
        <dbReference type="PROSITE-ProRule" id="PRU00085"/>
    </source>
</evidence>
<evidence type="ECO:0000269" key="2">
    <source>
    </source>
</evidence>
<evidence type="ECO:0000305" key="3"/>
<evidence type="ECO:0000312" key="4">
    <source>
        <dbReference type="MGI" id="MGI:1933180"/>
    </source>
</evidence>
<name>FH17E_MOUSE</name>
<protein>
    <recommendedName>
        <fullName evidence="4">Ferritin heavy polypeptide-like 17E</fullName>
    </recommendedName>
</protein>
<comment type="tissue specificity">
    <text evidence="2">Expressed in the testes and spermatogonia.</text>
</comment>
<comment type="similarity">
    <text evidence="3">Belongs to the ferritin family.</text>
</comment>
<dbReference type="EMBL" id="AF285569">
    <property type="protein sequence ID" value="AAK31948.1"/>
    <property type="molecule type" value="mRNA"/>
</dbReference>
<dbReference type="EMBL" id="AL806531">
    <property type="status" value="NOT_ANNOTATED_CDS"/>
    <property type="molecule type" value="Genomic_DNA"/>
</dbReference>
<dbReference type="CCDS" id="CCDS30003.1"/>
<dbReference type="RefSeq" id="NP_112551.2">
    <property type="nucleotide sequence ID" value="NM_031261.2"/>
</dbReference>
<dbReference type="SMR" id="Q99MX2"/>
<dbReference type="FunCoup" id="Q99MX2">
    <property type="interactions" value="137"/>
</dbReference>
<dbReference type="STRING" id="10090.ENSMUSP00000094254"/>
<dbReference type="PaxDb" id="10090-ENSMUSP00000094254"/>
<dbReference type="DNASU" id="83457"/>
<dbReference type="Ensembl" id="ENSMUST00000096509.7">
    <property type="protein sequence ID" value="ENSMUSP00000094254.6"/>
    <property type="gene ID" value="ENSMUSG00000071815.7"/>
</dbReference>
<dbReference type="GeneID" id="83457"/>
<dbReference type="KEGG" id="mmu:83457"/>
<dbReference type="UCSC" id="uc009spm.1">
    <property type="organism name" value="mouse"/>
</dbReference>
<dbReference type="AGR" id="MGI:1933180"/>
<dbReference type="CTD" id="83457"/>
<dbReference type="MGI" id="MGI:1933180">
    <property type="gene designation" value="Fthl17e"/>
</dbReference>
<dbReference type="VEuPathDB" id="HostDB:ENSMUSG00000071815"/>
<dbReference type="eggNOG" id="KOG2332">
    <property type="taxonomic scope" value="Eukaryota"/>
</dbReference>
<dbReference type="GeneTree" id="ENSGT00950000182841"/>
<dbReference type="HOGENOM" id="CLU_065681_4_0_1"/>
<dbReference type="InParanoid" id="Q99MX2"/>
<dbReference type="OMA" id="PTHAMES"/>
<dbReference type="OrthoDB" id="9561276at2759"/>
<dbReference type="PhylomeDB" id="Q99MX2"/>
<dbReference type="BioGRID-ORCS" id="83457">
    <property type="hits" value="1 hit in 42 CRISPR screens"/>
</dbReference>
<dbReference type="PRO" id="PR:Q99MX2"/>
<dbReference type="Proteomes" id="UP000000589">
    <property type="component" value="Chromosome X"/>
</dbReference>
<dbReference type="RNAct" id="Q99MX2">
    <property type="molecule type" value="protein"/>
</dbReference>
<dbReference type="Bgee" id="ENSMUSG00000071815">
    <property type="expression patterns" value="Expressed in blastoderm cell in morula and 2 other cell types or tissues"/>
</dbReference>
<dbReference type="GO" id="GO:0008199">
    <property type="term" value="F:ferric iron binding"/>
    <property type="evidence" value="ECO:0007669"/>
    <property type="project" value="InterPro"/>
</dbReference>
<dbReference type="GO" id="GO:0006879">
    <property type="term" value="P:intracellular iron ion homeostasis"/>
    <property type="evidence" value="ECO:0007669"/>
    <property type="project" value="UniProtKB-KW"/>
</dbReference>
<dbReference type="GO" id="GO:0006826">
    <property type="term" value="P:iron ion transport"/>
    <property type="evidence" value="ECO:0007669"/>
    <property type="project" value="InterPro"/>
</dbReference>
<dbReference type="CDD" id="cd01056">
    <property type="entry name" value="Euk_Ferritin"/>
    <property type="match status" value="1"/>
</dbReference>
<dbReference type="FunFam" id="1.20.1260.10:FF:000002">
    <property type="entry name" value="Ferritin, mitochondrial"/>
    <property type="match status" value="1"/>
</dbReference>
<dbReference type="Gene3D" id="1.20.1260.10">
    <property type="match status" value="1"/>
</dbReference>
<dbReference type="InterPro" id="IPR001519">
    <property type="entry name" value="Ferritin"/>
</dbReference>
<dbReference type="InterPro" id="IPR012347">
    <property type="entry name" value="Ferritin-like"/>
</dbReference>
<dbReference type="InterPro" id="IPR009040">
    <property type="entry name" value="Ferritin-like_diiron"/>
</dbReference>
<dbReference type="InterPro" id="IPR009078">
    <property type="entry name" value="Ferritin-like_SF"/>
</dbReference>
<dbReference type="InterPro" id="IPR014034">
    <property type="entry name" value="Ferritin_CS"/>
</dbReference>
<dbReference type="InterPro" id="IPR008331">
    <property type="entry name" value="Ferritin_DPS_dom"/>
</dbReference>
<dbReference type="PANTHER" id="PTHR11431">
    <property type="entry name" value="FERRITIN"/>
    <property type="match status" value="1"/>
</dbReference>
<dbReference type="PANTHER" id="PTHR11431:SF97">
    <property type="entry name" value="FERRITIN HEAVY POLYPEPTIDE-LIKE 17-RELATED"/>
    <property type="match status" value="1"/>
</dbReference>
<dbReference type="Pfam" id="PF00210">
    <property type="entry name" value="Ferritin"/>
    <property type="match status" value="1"/>
</dbReference>
<dbReference type="SUPFAM" id="SSF47240">
    <property type="entry name" value="Ferritin-like"/>
    <property type="match status" value="1"/>
</dbReference>
<dbReference type="PROSITE" id="PS00204">
    <property type="entry name" value="FERRITIN_2"/>
    <property type="match status" value="1"/>
</dbReference>
<dbReference type="PROSITE" id="PS50905">
    <property type="entry name" value="FERRITIN_LIKE"/>
    <property type="match status" value="1"/>
</dbReference>
<feature type="chain" id="PRO_0000201069" description="Ferritin heavy polypeptide-like 17E">
    <location>
        <begin position="1"/>
        <end position="176"/>
    </location>
</feature>
<feature type="domain" description="Ferritin-like diiron" evidence="1">
    <location>
        <begin position="10"/>
        <end position="159"/>
    </location>
</feature>
<feature type="binding site" evidence="1">
    <location>
        <position position="27"/>
    </location>
    <ligand>
        <name>Fe cation</name>
        <dbReference type="ChEBI" id="CHEBI:24875"/>
    </ligand>
</feature>
<feature type="binding site" evidence="1">
    <location>
        <position position="107"/>
    </location>
    <ligand>
        <name>Fe cation</name>
        <dbReference type="ChEBI" id="CHEBI:24875"/>
    </ligand>
</feature>
<feature type="binding site" evidence="1">
    <location>
        <position position="141"/>
    </location>
    <ligand>
        <name>Fe cation</name>
        <dbReference type="ChEBI" id="CHEBI:24875"/>
    </ligand>
</feature>
<feature type="sequence conflict" description="In Ref. 1; AAK31948." evidence="3" ref="1">
    <original>S</original>
    <variation>I</variation>
    <location>
        <position position="80"/>
    </location>
</feature>
<feature type="sequence conflict" description="In Ref. 1; AAK31948." evidence="3" ref="1">
    <original>G</original>
    <variation>D</variation>
    <location>
        <position position="84"/>
    </location>
</feature>
<keyword id="KW-0408">Iron</keyword>
<keyword id="KW-0409">Iron storage</keyword>
<keyword id="KW-0479">Metal-binding</keyword>
<keyword id="KW-1185">Reference proteome</keyword>
<accession>Q99MX2</accession>
<accession>L7MU38</accession>
<sequence length="176" mass="20491">MAEAPSRMQQNYDWQCEDAINTHIQLCLYASYEYMSMAVYFDRDDVAQENFKRFFLTKSHNCQTSAEMFMHLQNKRGGCSSLQGIARPERDSWHGGFQAMECAFHMEMLINQSLLNMHEVAKEKGDPHLCHFLEQNCLDQQVDILKEMSGYLTNLRQMGAVEHNLAEYLFDKLSLS</sequence>
<proteinExistence type="evidence at transcript level"/>
<gene>
    <name evidence="4" type="primary">Fthl17e</name>
    <name evidence="4" type="synonym">Fthl17</name>
</gene>
<organism>
    <name type="scientific">Mus musculus</name>
    <name type="common">Mouse</name>
    <dbReference type="NCBI Taxonomy" id="10090"/>
    <lineage>
        <taxon>Eukaryota</taxon>
        <taxon>Metazoa</taxon>
        <taxon>Chordata</taxon>
        <taxon>Craniata</taxon>
        <taxon>Vertebrata</taxon>
        <taxon>Euteleostomi</taxon>
        <taxon>Mammalia</taxon>
        <taxon>Eutheria</taxon>
        <taxon>Euarchontoglires</taxon>
        <taxon>Glires</taxon>
        <taxon>Rodentia</taxon>
        <taxon>Myomorpha</taxon>
        <taxon>Muroidea</taxon>
        <taxon>Muridae</taxon>
        <taxon>Murinae</taxon>
        <taxon>Mus</taxon>
        <taxon>Mus</taxon>
    </lineage>
</organism>